<keyword id="KW-0025">Alternative splicing</keyword>
<keyword id="KW-1003">Cell membrane</keyword>
<keyword id="KW-0967">Endosome</keyword>
<keyword id="KW-0325">Glycoprotein</keyword>
<keyword id="KW-0406">Ion transport</keyword>
<keyword id="KW-0458">Lysosome</keyword>
<keyword id="KW-0472">Membrane</keyword>
<keyword id="KW-1185">Reference proteome</keyword>
<keyword id="KW-0732">Signal</keyword>
<keyword id="KW-0812">Transmembrane</keyword>
<keyword id="KW-1133">Transmembrane helix</keyword>
<keyword id="KW-0813">Transport</keyword>
<keyword id="KW-0832">Ubl conjugation</keyword>
<keyword id="KW-0862">Zinc</keyword>
<keyword id="KW-0864">Zinc transport</keyword>
<feature type="signal peptide" evidence="2">
    <location>
        <begin position="1"/>
        <end position="28"/>
    </location>
</feature>
<feature type="chain" id="PRO_0000312195" description="Metal cation symporter ZIP14">
    <location>
        <begin position="29"/>
        <end position="489"/>
    </location>
</feature>
<feature type="topological domain" description="Extracellular" evidence="2">
    <location>
        <begin position="29"/>
        <end position="155"/>
    </location>
</feature>
<feature type="transmembrane region" description="Helical" evidence="2">
    <location>
        <begin position="156"/>
        <end position="176"/>
    </location>
</feature>
<feature type="topological domain" description="Cytoplasmic" evidence="2">
    <location>
        <begin position="177"/>
        <end position="184"/>
    </location>
</feature>
<feature type="transmembrane region" description="Helical" evidence="2">
    <location>
        <begin position="185"/>
        <end position="205"/>
    </location>
</feature>
<feature type="topological domain" description="Extracellular" evidence="2">
    <location>
        <begin position="206"/>
        <end position="221"/>
    </location>
</feature>
<feature type="transmembrane region" description="Helical" evidence="2">
    <location>
        <begin position="222"/>
        <end position="242"/>
    </location>
</feature>
<feature type="topological domain" description="Cytoplasmic" evidence="2">
    <location>
        <begin position="243"/>
        <end position="349"/>
    </location>
</feature>
<feature type="transmembrane region" description="Helical" evidence="2">
    <location>
        <begin position="350"/>
        <end position="370"/>
    </location>
</feature>
<feature type="topological domain" description="Extracellular" evidence="2">
    <location>
        <begin position="371"/>
        <end position="394"/>
    </location>
</feature>
<feature type="transmembrane region" description="Helical" evidence="2">
    <location>
        <begin position="395"/>
        <end position="415"/>
    </location>
</feature>
<feature type="topological domain" description="Cytoplasmic" evidence="2">
    <location>
        <begin position="416"/>
        <end position="421"/>
    </location>
</feature>
<feature type="transmembrane region" description="Helical" evidence="2">
    <location>
        <begin position="422"/>
        <end position="442"/>
    </location>
</feature>
<feature type="topological domain" description="Extracellular" evidence="2">
    <location>
        <begin position="443"/>
        <end position="457"/>
    </location>
</feature>
<feature type="transmembrane region" description="Helical" evidence="2">
    <location>
        <begin position="458"/>
        <end position="478"/>
    </location>
</feature>
<feature type="topological domain" description="Cytoplasmic" evidence="2">
    <location>
        <begin position="479"/>
        <end position="489"/>
    </location>
</feature>
<feature type="short sequence motif" description="HHHGHXHX-motif" evidence="1">
    <location>
        <begin position="248"/>
        <end position="255"/>
    </location>
</feature>
<feature type="short sequence motif" description="XEXPHE-motif" evidence="1">
    <location>
        <begin position="373"/>
        <end position="378"/>
    </location>
</feature>
<feature type="glycosylation site" description="N-linked (GlcNAc...) asparagine" evidence="9 10">
    <location>
        <position position="52"/>
    </location>
</feature>
<feature type="glycosylation site" description="N-linked (GlcNAc...) asparagine" evidence="9">
    <location>
        <position position="75"/>
    </location>
</feature>
<feature type="glycosylation site" description="N-linked (GlcNAc...) asparagine" evidence="9">
    <location>
        <position position="85"/>
    </location>
</feature>
<feature type="glycosylation site" description="N-linked (GlcNAc...) asparagine" evidence="9 10">
    <location>
        <position position="100"/>
    </location>
</feature>
<feature type="splice variant" id="VSP_060552" description="In isoform 2.">
    <original>VWGYGFLCVTVISLCSLMGASVVPFMKKTFYKRLLLYFIALAIGTLYSNALFQLIPE</original>
    <variation>VWGFGFLSVSLINLASLLGVLVLPCTEKAFFSRVLTYFIALSIGTLLSNALFQLIPE</variation>
    <location>
        <begin position="151"/>
        <end position="207"/>
    </location>
</feature>
<feature type="mutagenesis site" description="When overexpressed ubiquitously in conditional knockin mice, perinatally lethal; when overexpressed in osteoblasts in conditional knockin mice, produces a severe skeletal phenotype marked by a drastic increase in cortical thickness due to an enhanced endosteal bone formation; when overexpressed in osteoclasts in conditional knockin mice, no effect on bone hemostasis." evidence="21">
    <original>L</original>
    <variation>R</variation>
    <location>
        <position position="438"/>
    </location>
</feature>
<feature type="sequence conflict" description="In Ref. 3; AAH21530." evidence="26" ref="3">
    <original>Y</original>
    <variation>F</variation>
    <location>
        <position position="154"/>
    </location>
</feature>
<feature type="sequence conflict" description="In Ref. 3; AAH21530." evidence="26" ref="3">
    <original>CVTVISLCSLMGASVVPFMKKTFYKRLLL</original>
    <variation>SVSLINLASLLGVLVLPCTEKAFFSRVLT</variation>
    <location>
        <begin position="158"/>
        <end position="186"/>
    </location>
</feature>
<feature type="sequence conflict" description="In Ref. 3; AAH21530." evidence="26" ref="3">
    <original>A</original>
    <variation>S</variation>
    <location>
        <position position="192"/>
    </location>
</feature>
<feature type="sequence conflict" description="In Ref. 3; AAH21530." evidence="26" ref="3">
    <original>Y</original>
    <variation>L</variation>
    <location>
        <position position="197"/>
    </location>
</feature>
<proteinExistence type="evidence at protein level"/>
<name>S39AE_MOUSE</name>
<organism>
    <name type="scientific">Mus musculus</name>
    <name type="common">Mouse</name>
    <dbReference type="NCBI Taxonomy" id="10090"/>
    <lineage>
        <taxon>Eukaryota</taxon>
        <taxon>Metazoa</taxon>
        <taxon>Chordata</taxon>
        <taxon>Craniata</taxon>
        <taxon>Vertebrata</taxon>
        <taxon>Euteleostomi</taxon>
        <taxon>Mammalia</taxon>
        <taxon>Eutheria</taxon>
        <taxon>Euarchontoglires</taxon>
        <taxon>Glires</taxon>
        <taxon>Rodentia</taxon>
        <taxon>Myomorpha</taxon>
        <taxon>Muroidea</taxon>
        <taxon>Muridae</taxon>
        <taxon>Murinae</taxon>
        <taxon>Mus</taxon>
        <taxon>Mus</taxon>
    </lineage>
</organism>
<accession>Q75N73</accession>
<accession>A0A0R4J1V1</accession>
<accession>Q80U85</accession>
<accession>Q8VDL0</accession>
<comment type="function">
    <text evidence="1 4 5 7 8 11 12 13 14 15 16 17 19 20 23">Electroneutral transporter of the plasma membrane mediating the cellular uptake of the divalent metal cations zinc, manganese and iron that are important for tissue homeostasis, metabolism, development and immunity (PubMed:15863613, PubMed:16950869, PubMed:18270315, PubMed:19179618, PubMed:21653899, PubMed:28673968). Functions as an energy-dependent symporter, transporting through the membranes an electroneutral complex composed of a divalent metal cation and two bicarbonate anions (PubMed:18270315). Beside these endogenous cellular substrates, can also import cadmium a non-essential metal which is cytotoxic and carcinogenic (PubMed:18270315). Controls the cellular uptake by the intestinal epithelium of systemic zinc, which is in turn required to maintain tight junctions and the intestinal permeability (PubMed:25428902). Modifies the activity of zinc-dependent phosphodiesterases, thereby indirectly regulating G protein-coupled receptor signaling pathways important for gluconeogenesis and chondrocyte differentiation (PubMed:21445361). Regulates insulin receptor signaling, glucose uptake, glycogen synthesis and gluconeogenesis in hepatocytes through the zinc-dependent intracellular catabolism of insulin (PubMed:27703010). Through zinc cellular uptake also plays a role in the adaptation of cells to endoplasmic reticulum stress (PubMed:28673968). Major manganese transporter of the basolateral membrane of intestinal epithelial cells, it plays a central role in manganese systemic homeostasis through intestinal manganese uptake (PubMed:31028174). Also involved in manganese extracellular uptake by cells of the blood-brain barrier (By similarity). May also play a role in manganese and zinc homeostasis participating in their elimination from the blood through the hepatobiliary excretion (PubMed:28536273). Also functions in the extracellular uptake of free iron (PubMed:16950869, PubMed:19179618, PubMed:21653899, PubMed:23110240, PubMed:26028554). May also function intracellularly and mediate the transport from endosomes to cytosol of iron endocytosed by transferrin (PubMed:20682781). Plays a role in innate immunity by regulating the expression of cytokines by activated macrophages (By similarity).</text>
</comment>
<comment type="catalytic activity">
    <reaction evidence="28">
        <text>Zn(2+)(out) + 2 hydrogencarbonate(out) = Zn(2+)(in) + 2 hydrogencarbonate(in)</text>
        <dbReference type="Rhea" id="RHEA:62252"/>
        <dbReference type="ChEBI" id="CHEBI:17544"/>
        <dbReference type="ChEBI" id="CHEBI:29105"/>
    </reaction>
    <physiologicalReaction direction="left-to-right" evidence="4 5 7 13">
        <dbReference type="Rhea" id="RHEA:62253"/>
    </physiologicalReaction>
</comment>
<comment type="catalytic activity">
    <reaction evidence="27 28">
        <text>Mn(2+)(out) + 2 hydrogencarbonate(out) = Mn(2+)(in) + 2 hydrogencarbonate(in)</text>
        <dbReference type="Rhea" id="RHEA:62260"/>
        <dbReference type="ChEBI" id="CHEBI:17544"/>
        <dbReference type="ChEBI" id="CHEBI:29035"/>
    </reaction>
    <physiologicalReaction direction="left-to-right" evidence="7 13">
        <dbReference type="Rhea" id="RHEA:62261"/>
    </physiologicalReaction>
</comment>
<comment type="catalytic activity">
    <reaction evidence="5 13">
        <text>Fe(2+)(out) + 2 hydrogencarbonate(out) = Fe(2+)(in) + 2 hydrogencarbonate(in)</text>
        <dbReference type="Rhea" id="RHEA:62368"/>
        <dbReference type="ChEBI" id="CHEBI:17544"/>
        <dbReference type="ChEBI" id="CHEBI:29033"/>
    </reaction>
    <physiologicalReaction direction="left-to-right" evidence="5 13">
        <dbReference type="Rhea" id="RHEA:62369"/>
    </physiologicalReaction>
</comment>
<comment type="catalytic activity">
    <reaction evidence="7">
        <text>Cd(2+)(out) + 2 hydrogencarbonate(out) = Cd(2+)(in) + 2 hydrogencarbonate(in)</text>
        <dbReference type="Rhea" id="RHEA:62256"/>
        <dbReference type="ChEBI" id="CHEBI:17544"/>
        <dbReference type="ChEBI" id="CHEBI:48775"/>
    </reaction>
    <physiologicalReaction direction="left-to-right" evidence="7">
        <dbReference type="Rhea" id="RHEA:62257"/>
    </physiologicalReaction>
</comment>
<comment type="activity regulation">
    <text evidence="7">Inhibited by cyanide and therefore dependent of an energy source (PubMed:18270315). Inhibited by DIDS/4,4'-diisothiocyanatostilbene-2,2'-disulfonic acid, an inhibitor hydrogencarbonate-dependent transporters (PubMed:18270315).</text>
</comment>
<comment type="biophysicochemical properties">
    <phDependence>
        <text evidence="7">Optimum pH is 7.5.</text>
    </phDependence>
    <temperatureDependence>
        <text evidence="7">Optimum temperature is 37 degrees Celsius.</text>
    </temperatureDependence>
</comment>
<comment type="biophysicochemical properties">
    <molecule>Isoform 1</molecule>
    <kinetics>
        <KM evidence="7">0.14 mM for Cd(2+)</KM>
        <KM evidence="7">4.4 mM for Mn(2+)</KM>
        <KM evidence="13">2.3 uM for Fe(2+)</KM>
        <KM evidence="13">1.9 uM for Zn(2+)</KM>
        <Vmax evidence="7">25.0 pmol/min/mg enzyme for the transport of Cd(2+)</Vmax>
        <Vmax evidence="7">330.0 pmol/min/mg enzyme for the transport of Mn(2+)</Vmax>
    </kinetics>
    <phDependence>
        <text evidence="7 13">Optimum pH is 7.5.</text>
    </phDependence>
    <temperatureDependence>
        <text evidence="7">Optimum temperature is 37 degrees Celsius.</text>
    </temperatureDependence>
</comment>
<comment type="biophysicochemical properties">
    <molecule>Isoform 2</molecule>
    <kinetics>
        <KM evidence="7">1.1 mM for Cd(2+)</KM>
        <KM evidence="7">18.2 mM for Mn(2+)</KM>
        <Vmax evidence="7">113.0 pmol/min/mg enzyme for the transport of Cd(2+)</Vmax>
        <Vmax evidence="7">1140.0 pmol/min/mg enzyme for the transport of Mn(2+)</Vmax>
    </kinetics>
    <phDependence>
        <text evidence="7">Optimum pH is 7.5 (PubMed:18270315). Optimum temperature is 37 degrees Celsius (PubMed:18270315).</text>
    </phDependence>
</comment>
<comment type="subunit">
    <text evidence="1">Homotrimer.</text>
</comment>
<comment type="subcellular location">
    <subcellularLocation>
        <location evidence="3 4 5 8">Cell membrane</location>
        <topology evidence="2">Multi-pass membrane protein</topology>
    </subcellularLocation>
    <subcellularLocation>
        <location evidence="7">Apical cell membrane</location>
        <topology evidence="2">Multi-pass membrane protein</topology>
    </subcellularLocation>
    <subcellularLocation>
        <location evidence="15 19">Basolateral cell membrane</location>
        <topology evidence="2">Multi-pass membrane protein</topology>
    </subcellularLocation>
    <subcellularLocation>
        <location evidence="1">Early endosome membrane</location>
        <topology evidence="2">Multi-pass membrane protein</topology>
    </subcellularLocation>
    <subcellularLocation>
        <location evidence="1">Late endosome membrane</location>
        <topology evidence="2">Multi-pass membrane protein</topology>
    </subcellularLocation>
    <subcellularLocation>
        <location evidence="1">Lysosome membrane</location>
        <topology evidence="2">Multi-pass membrane protein</topology>
    </subcellularLocation>
    <text evidence="1 15 19">Localized at the basolateral membrane of enterocytes (PubMed:25428902, PubMed:28536273). Enriched at the plasma membrane upon glucose uptake (By similarity). Localized and functional at both apical and basolateral membranes of microvascular capillary endothelial cells that constitute the blood-brain barrier (By similarity).</text>
</comment>
<comment type="alternative products">
    <event type="alternative splicing"/>
    <isoform>
        <id>Q75N73-1</id>
        <name>1</name>
        <name evidence="25">ZIP14B</name>
        <sequence type="displayed"/>
    </isoform>
    <isoform>
        <id>Q75N73-3</id>
        <name>2</name>
        <name evidence="25">ZIP14A</name>
        <sequence type="described" ref="VSP_060552"/>
    </isoform>
</comment>
<comment type="tissue specificity">
    <text evidence="3 4 5 6 7 12 15">Widely expressed (PubMed:18270315). Highly and transiently expressed during the early stage of adipocyte differentiation. Strongly expressed in liver, preadipocyte, duodenum and jejunum, moderately in brain, heart, skeletal muscle, spleen, pancreas, kidney and white adipose cells. Expression is almost undetectable in lung, testis and brown adipose cells (PubMed:15794747, PubMed:15863613, PubMed:16950869, PubMed:17065364, PubMed:25428902). Expressed by chondrocytes and pituitary cells (PubMed:21445361).</text>
</comment>
<comment type="tissue specificity">
    <molecule>Isoform 1</molecule>
    <text evidence="7">More strongly expressed in brain.</text>
</comment>
<comment type="tissue specificity">
    <molecule>Isoform 2</molecule>
    <text evidence="7">More strongly expressed in liver, kidney and duodenum.</text>
</comment>
<comment type="developmental stage">
    <text evidence="21">In the KS483 cell model for osteoblast differentiation, expression levels peaks during the mineralization phase (days 18-21 of differentiation).</text>
</comment>
<comment type="induction">
    <text evidence="4 5 6 8 17 18 20">Up-regulated during the lipopolysaccharide/LPS-induced inflammatory response (at protein level) (PubMed:16950869). Up-regulated by IL6 (PubMed:15863613, PubMed:16950869, PubMed:17065364). Up-regulated by interleukin-1/IL1 via nitric oxide (PubMed:19179618). Up-regulated upon endoplasmic reticulum stress induced by tunicamycin or high-fat diet (at protein level) (PubMed:28673968). Up-regulated into hepatocytes upon glucose uptake (at protein level) (PubMed:27703010). Up-regulated by iron in retina (at protein level) (PubMed:28057442).</text>
</comment>
<comment type="PTM">
    <text evidence="1">Ubiquitinated. Ubiquitination occurs upon iron depletion. The ubiquitinated form undergoes proteasomal degradation.</text>
</comment>
<comment type="PTM">
    <text evidence="1 7 12">N-glycosylated (PubMed:18270315, PubMed:21445361). N-glycosylation at Asn-100 is required for iron-regulated extraction of the transporter from membranes and subsequent proteasomal degradation (By similarity).</text>
</comment>
<comment type="disruption phenotype">
    <text evidence="12 14 15 16 17 19 22 23">Homozygous knockout mice exhibit growth retardation and dwarfism, visible even in neonates (PubMed:21445361). They exhibit moderate osteoporotic phenotypes associated with decreased bone volume and trabecular number, and increased trabecular separation (PubMed:21445361). The length of the long bones is also significantly reduced (PubMed:21445361). The decrease in bone mass is associated with increased bone resorption (PubMed:29632817). The metabolism of these mice is also affected and they constitute a model of metabolic endotoxemia with high body fat, hypoglycemia and hyperinsulinemia (PubMed:23110240, PubMed:27703010). The knockout of the gene also results in less effective blood manganese elimination and accumulation in the brain where it alters motor functions (PubMed:28536273). Knockout mice also display increased iron absorption and decreased lipopolysaccharide/LPS-induced IL-6 production (PubMed:23110240, PubMed:26028554). The permeability of the intestinal barrier is also compromised (PubMed:25428902). Conditional intestinal-specific knockout of the gene results in increased manganese levels in brain and liver while the liver-specific knockout reduces manganese levels only in liver (PubMed:31028174).</text>
</comment>
<comment type="similarity">
    <text evidence="26">Belongs to the ZIP transporter (TC 2.A.5) family.</text>
</comment>
<comment type="sequence caution" evidence="26">
    <molecule>Isoform 1</molecule>
    <conflict type="miscellaneous discrepancy">
        <sequence resource="EMBL-CDS" id="BAC65479"/>
    </conflict>
    <text>Probable cloning artifact.</text>
</comment>
<sequence length="489" mass="53962">MKRLHPALPSCLLLVLFGIWRTAPQTHASSAGLPPLSATSFLEDLMDRYGKNDSLTLTQLKSLLDHLHVGVGRDNVSQPKEGPRNLSTCFSSGDLFAAHNLSERSQIGASEFQEFCPTILQQLDSQACTSENQKSEENEQTEEGKPSAIEVWGYGFLCVTVISLCSLMGASVVPFMKKTFYKRLLLYFIALAIGTLYSNALFQLIPEAFGFNPQDNYVSKSAVVFGGFYLFFFTEKILKMLLKQKNEHHHGHNHFTSETLPSKKDQEEGVTEKLQNGDLDHMIPQHCNSELDGKAPGTDEKVIVNSMSVQDLQASQSACYWLKGVRYSDIGTLAWMITLSDGLHNFIDGLAIGASFTVSVFQGISTSVAILCEEFPHELGDFVILLNAGMSIQQALFFNFLSACCCYLGLAFGILAGSHFSANWIFALAGGMFLYIALADMFPEMNEVCQEDEKNDSFLVPFVIQNLGLLTGFSIMLVLTMYSGQIQIG</sequence>
<reference key="1">
    <citation type="journal article" date="2005" name="FEBS J.">
        <title>SLC39A14, a LZT protein, is induced in adipogenesis and transports zinc.</title>
        <authorList>
            <person name="Tominaga K."/>
            <person name="Kagata T."/>
            <person name="Johmura Y."/>
            <person name="Hishida T."/>
            <person name="Nishizuka M."/>
            <person name="Imagawa M."/>
        </authorList>
    </citation>
    <scope>NUCLEOTIDE SEQUENCE [MRNA] (ISOFORM 1)</scope>
    <scope>TISSUE SPECIFICITY</scope>
    <scope>FUNCTION</scope>
    <scope>SUBCELLULAR LOCATION</scope>
</reference>
<reference key="2">
    <citation type="journal article" date="2009" name="PLoS Biol.">
        <title>Lineage-specific biology revealed by a finished genome assembly of the mouse.</title>
        <authorList>
            <person name="Church D.M."/>
            <person name="Goodstadt L."/>
            <person name="Hillier L.W."/>
            <person name="Zody M.C."/>
            <person name="Goldstein S."/>
            <person name="She X."/>
            <person name="Bult C.J."/>
            <person name="Agarwala R."/>
            <person name="Cherry J.L."/>
            <person name="DiCuccio M."/>
            <person name="Hlavina W."/>
            <person name="Kapustin Y."/>
            <person name="Meric P."/>
            <person name="Maglott D."/>
            <person name="Birtle Z."/>
            <person name="Marques A.C."/>
            <person name="Graves T."/>
            <person name="Zhou S."/>
            <person name="Teague B."/>
            <person name="Potamousis K."/>
            <person name="Churas C."/>
            <person name="Place M."/>
            <person name="Herschleb J."/>
            <person name="Runnheim R."/>
            <person name="Forrest D."/>
            <person name="Amos-Landgraf J."/>
            <person name="Schwartz D.C."/>
            <person name="Cheng Z."/>
            <person name="Lindblad-Toh K."/>
            <person name="Eichler E.E."/>
            <person name="Ponting C.P."/>
        </authorList>
    </citation>
    <scope>NUCLEOTIDE SEQUENCE [LARGE SCALE GENOMIC DNA]</scope>
    <source>
        <strain>C57BL/6J</strain>
    </source>
</reference>
<reference key="3">
    <citation type="journal article" date="2004" name="Genome Res.">
        <title>The status, quality, and expansion of the NIH full-length cDNA project: the Mammalian Gene Collection (MGC).</title>
        <authorList>
            <consortium name="The MGC Project Team"/>
        </authorList>
    </citation>
    <scope>NUCLEOTIDE SEQUENCE [LARGE SCALE MRNA] (ISOFORM 1)</scope>
    <source>
        <strain>FVB/N</strain>
        <tissue>Mammary tumor</tissue>
    </source>
</reference>
<reference key="4">
    <citation type="journal article" date="2003" name="DNA Res.">
        <title>Prediction of the coding sequences of mouse homologues of KIAA gene: II. The complete nucleotide sequences of 400 mouse KIAA-homologous cDNAs identified by screening of terminal sequences of cDNA clones randomly sampled from size-fractionated libraries.</title>
        <authorList>
            <person name="Okazaki N."/>
            <person name="Kikuno R."/>
            <person name="Ohara R."/>
            <person name="Inamoto S."/>
            <person name="Aizawa H."/>
            <person name="Yuasa S."/>
            <person name="Nakajima D."/>
            <person name="Nagase T."/>
            <person name="Ohara O."/>
            <person name="Koga H."/>
        </authorList>
    </citation>
    <scope>NUCLEOTIDE SEQUENCE [LARGE SCALE MRNA] OF 43-489 (ISOFORM 1)</scope>
    <source>
        <tissue>Brain</tissue>
    </source>
</reference>
<reference key="5">
    <citation type="journal article" date="2005" name="Proc. Natl. Acad. Sci. U.S.A.">
        <title>Interleukin-6 regulates the zinc transporter Zip14 in liver and contributes to the hypozincemia of the acute-phase response.</title>
        <authorList>
            <person name="Liuzzi J.P."/>
            <person name="Lichten L.A."/>
            <person name="Rivera S."/>
            <person name="Blanchard R.K."/>
            <person name="Aydemir T.B."/>
            <person name="Knutson M.D."/>
            <person name="Ganz T."/>
            <person name="Cousins R.J."/>
        </authorList>
    </citation>
    <scope>FUNCTION</scope>
    <scope>TRANSPORTER ACTIVITY</scope>
    <scope>INDUCTION BY IL6</scope>
    <scope>SUBCELLULAR LOCATION</scope>
    <scope>TISSUE SPECIFICITY</scope>
</reference>
<reference key="6">
    <citation type="journal article" date="2006" name="Proc. Natl. Acad. Sci. U.S.A.">
        <title>Zip14 (Slc39a14) mediates non-transferrin-bound iron uptake into cells.</title>
        <authorList>
            <person name="Liuzzi J.P."/>
            <person name="Aydemir F."/>
            <person name="Nam H."/>
            <person name="Knutson M.D."/>
            <person name="Cousins R.J."/>
        </authorList>
    </citation>
    <scope>FUNCTION</scope>
    <scope>TRANSPORTER ACTIVITY</scope>
    <scope>INDUCTION BY IL6</scope>
    <scope>SUBCELLULAR LOCATION</scope>
    <scope>TISSUE SPECIFICITY</scope>
</reference>
<reference key="7">
    <citation type="journal article" date="2007" name="J. Pharmacol. Exp. Ther.">
        <title>Induction of metallothionein by manganese is completely dependent on interleukin-6 production.</title>
        <authorList>
            <person name="Kobayashi K."/>
            <person name="Kuroda J."/>
            <person name="Shibata N."/>
            <person name="Hasegawa T."/>
            <person name="Seko Y."/>
            <person name="Satoh M."/>
            <person name="Tohyama C."/>
            <person name="Takano H."/>
            <person name="Imura N."/>
            <person name="Sakabe K."/>
            <person name="Fujishiro H."/>
            <person name="Himeno S."/>
        </authorList>
    </citation>
    <scope>INDUCTION BY IL6</scope>
    <scope>TISSUE SPECIFICITY</scope>
    <scope>FUNCTION</scope>
</reference>
<reference key="8">
    <citation type="journal article" date="2008" name="Mol. Pharmacol.">
        <title>Slc39a14 gene encodes ZIP14, a metal/bicarbonate symporter: similarities to the ZIP8 transporter.</title>
        <authorList>
            <person name="Girijashanker K."/>
            <person name="He L."/>
            <person name="Soleimani M."/>
            <person name="Reed J.M."/>
            <person name="Li H."/>
            <person name="Liu Z."/>
            <person name="Wang B."/>
            <person name="Dalton T.P."/>
            <person name="Nebert D.W."/>
        </authorList>
    </citation>
    <scope>FUNCTION</scope>
    <scope>TRANSPORTER ACTIVITY</scope>
    <scope>SUBSTRATE SPECIFICITY (ISOFORMS 1 AND 2)</scope>
    <scope>BIOPHYSICOCHEMICAL PROPERTIES (ISOFORMS 1 AND 2)</scope>
    <scope>ACTIVITY REGULATION</scope>
    <scope>ALTERNATIVE SPLICING(ISOFORMS 1 AND 2)</scope>
    <scope>SUBCELLULAR LOCATION</scope>
    <scope>TISSUE SPECIFICITY (ISOFORMS 1 AND 2)</scope>
    <scope>GLYCOSYLATION</scope>
</reference>
<reference key="9">
    <citation type="journal article" date="2009" name="Am. J. Physiol.">
        <title>Interleukin-1beta contributes via nitric oxide to the upregulation and functional activity of the zinc transporter Zip14 (Slc39a14) in murine hepatocytes.</title>
        <authorList>
            <person name="Lichten L.A."/>
            <person name="Liuzzi J.P."/>
            <person name="Cousins R.J."/>
        </authorList>
    </citation>
    <scope>FUNCTION</scope>
    <scope>SUBCELLULAR LOCATION</scope>
    <scope>INDUCTION</scope>
</reference>
<reference key="10">
    <citation type="journal article" date="2009" name="Mol. Cell. Proteomics">
        <title>The mouse C2C12 myoblast cell surface N-linked glycoproteome: identification, glycosite occupancy, and membrane orientation.</title>
        <authorList>
            <person name="Gundry R.L."/>
            <person name="Raginski K."/>
            <person name="Tarasova Y."/>
            <person name="Tchernyshyov I."/>
            <person name="Bausch-Fluck D."/>
            <person name="Elliott S.T."/>
            <person name="Boheler K.R."/>
            <person name="Van Eyk J.E."/>
            <person name="Wollscheid B."/>
        </authorList>
    </citation>
    <scope>GLYCOSYLATION [LARGE SCALE ANALYSIS] AT ASN-52 AND ASN-100</scope>
    <source>
        <tissue>Myoblast</tissue>
    </source>
</reference>
<reference key="11">
    <citation type="journal article" date="2009" name="Nat. Biotechnol.">
        <title>Mass-spectrometric identification and relative quantification of N-linked cell surface glycoproteins.</title>
        <authorList>
            <person name="Wollscheid B."/>
            <person name="Bausch-Fluck D."/>
            <person name="Henderson C."/>
            <person name="O'Brien R."/>
            <person name="Bibel M."/>
            <person name="Schiess R."/>
            <person name="Aebersold R."/>
            <person name="Watts J.D."/>
        </authorList>
    </citation>
    <scope>GLYCOSYLATION [LARGE SCALE ANALYSIS] AT ASN-52; ASN-75; ASN-85 AND ASN-100</scope>
</reference>
<reference key="12">
    <citation type="journal article" date="2010" name="Cell">
        <title>A tissue-specific atlas of mouse protein phosphorylation and expression.</title>
        <authorList>
            <person name="Huttlin E.L."/>
            <person name="Jedrychowski M.P."/>
            <person name="Elias J.E."/>
            <person name="Goswami T."/>
            <person name="Rad R."/>
            <person name="Beausoleil S.A."/>
            <person name="Villen J."/>
            <person name="Haas W."/>
            <person name="Sowa M.E."/>
            <person name="Gygi S.P."/>
        </authorList>
    </citation>
    <scope>IDENTIFICATION BY MASS SPECTROMETRY [LARGE SCALE ANALYSIS]</scope>
    <source>
        <tissue>Liver</tissue>
        <tissue>Pancreas</tissue>
    </source>
</reference>
<reference key="13">
    <citation type="journal article" date="2010" name="J. Biol. Chem.">
        <title>ZRT/IRT-like protein 14 (ZIP14) promotes the cellular assimilation of iron from transferrin.</title>
        <authorList>
            <person name="Zhao N."/>
            <person name="Gao J."/>
            <person name="Enns C.A."/>
            <person name="Knutson M.D."/>
        </authorList>
    </citation>
    <scope>FUNCTION</scope>
</reference>
<reference key="14">
    <citation type="journal article" date="2011" name="Am. J. Physiol.">
        <title>Zip14 is a complex broad-scope metal-ion transporter whose functional properties support roles in the cellular uptake of zinc and nontransferrin-bound iron.</title>
        <authorList>
            <person name="Pinilla-Tenas J.J."/>
            <person name="Sparkman B.K."/>
            <person name="Shawki A."/>
            <person name="Illing A.C."/>
            <person name="Mitchell C.J."/>
            <person name="Zhao N."/>
            <person name="Liuzzi J.P."/>
            <person name="Cousins R.J."/>
            <person name="Knutson M.D."/>
            <person name="Mackenzie B."/>
        </authorList>
    </citation>
    <scope>FUNCTION</scope>
    <scope>TRANSPORTER ACTIVITY</scope>
    <scope>BIOPHYSICOCHEMICAL PROPERTIES</scope>
</reference>
<reference key="15">
    <citation type="journal article" date="2011" name="PLoS ONE">
        <title>The zinc transporter SLC39A14/ZIP14 controls G-protein coupled receptor-mediated signaling required for systemic growth.</title>
        <authorList>
            <person name="Hojyo S."/>
            <person name="Fukada T."/>
            <person name="Shimoda S."/>
            <person name="Ohashi W."/>
            <person name="Bin B.H."/>
            <person name="Koseki H."/>
            <person name="Hirano T."/>
        </authorList>
    </citation>
    <scope>FUNCTION</scope>
    <scope>TISSUE SPECIFICITY</scope>
    <scope>GLYCOSYLATION</scope>
    <scope>DISRUPTION PHENOTYPE</scope>
</reference>
<reference key="16">
    <citation type="journal article" date="2012" name="PLoS ONE">
        <title>Zinc transporter ZIP14 functions in hepatic zinc, iron and glucose homeostasis during the innate immune response (endotoxemia).</title>
        <authorList>
            <person name="Aydemir T.B."/>
            <person name="Chang S.M."/>
            <person name="Guthrie G.J."/>
            <person name="Maki A.B."/>
            <person name="Ryu M.S."/>
            <person name="Karabiyik A."/>
            <person name="Cousins R.J."/>
        </authorList>
    </citation>
    <scope>FUNCTION</scope>
    <scope>DISRUPTION PHENOTYPE</scope>
</reference>
<reference key="17">
    <citation type="journal article" date="2015" name="Am. J. Physiol.">
        <title>Influence of ZIP14 (slc39A14) on intestinal zinc processing and barrier function.</title>
        <authorList>
            <person name="Guthrie G.J."/>
            <person name="Aydemir T.B."/>
            <person name="Troche C."/>
            <person name="Martin A.B."/>
            <person name="Chang S.M."/>
            <person name="Cousins R.J."/>
        </authorList>
    </citation>
    <scope>FUNCTION</scope>
    <scope>SUBCELLULAR LOCATION</scope>
    <scope>TISSUE SPECIFICITY</scope>
    <scope>DISRUPTION PHENOTYPE</scope>
</reference>
<reference key="18">
    <citation type="journal article" date="2015" name="Cell Metab.">
        <title>SLC39A14 Is Required for the Development of Hepatocellular Iron Overload in Murine Models of Hereditary Hemochromatosis.</title>
        <authorList>
            <person name="Jenkitkasemwong S."/>
            <person name="Wang C.Y."/>
            <person name="Coffey R."/>
            <person name="Zhang W."/>
            <person name="Chan A."/>
            <person name="Biel T."/>
            <person name="Kim J.S."/>
            <person name="Hojyo S."/>
            <person name="Fukada T."/>
            <person name="Knutson M.D."/>
        </authorList>
    </citation>
    <scope>FUNCTION</scope>
    <scope>DISRUPTION PHENOTYPE</scope>
</reference>
<reference key="19">
    <citation type="journal article" date="2016" name="J. Biol. Chem.">
        <title>Hepatic ZIP14-mediated Zinc Transport Contributes to Endosomal Insulin Receptor Trafficking and Glucose Metabolism.</title>
        <authorList>
            <person name="Aydemir T.B."/>
            <person name="Troche C."/>
            <person name="Kim M.H."/>
            <person name="Cousins R.J."/>
        </authorList>
    </citation>
    <scope>FUNCTION</scope>
    <scope>INDUCTION</scope>
    <scope>DISRUPTION PHENOTYPE</scope>
</reference>
<reference key="20">
    <citation type="journal article" date="2017" name="Exp. Eye Res.">
        <title>Iron importers Zip8 and Zip14 are expressed in retina and regulated by retinal iron levels.</title>
        <authorList>
            <person name="Sterling J."/>
            <person name="Guttha S."/>
            <person name="Song Y."/>
            <person name="Song D."/>
            <person name="Hadziahmetovic M."/>
            <person name="Dunaief J.L."/>
        </authorList>
    </citation>
    <scope>INDUCTION</scope>
</reference>
<reference key="21">
    <citation type="journal article" date="2017" name="J. Neurosci.">
        <title>Metal Transporter Zip14 (Slc39a14) Deletion in Mice Increases Manganese Deposition and Produces Neurotoxic Signatures and Diminished Motor Activity.</title>
        <authorList>
            <person name="Aydemir T.B."/>
            <person name="Kim M.H."/>
            <person name="Kim J."/>
            <person name="Colon-Perez L.M."/>
            <person name="Banan G."/>
            <person name="Mareci T.H."/>
            <person name="Febo M."/>
            <person name="Cousins R.J."/>
        </authorList>
    </citation>
    <scope>FUNCTION</scope>
    <scope>SUBCELLULAR LOCATION</scope>
    <scope>DISRUPTION PHENOTYPE</scope>
</reference>
<reference key="22">
    <citation type="journal article" date="2017" name="Proc. Natl. Acad. Sci. U.S.A.">
        <title>Hepatic ZIP14-mediated zinc transport is required for adaptation to endoplasmic reticulum stress.</title>
        <authorList>
            <person name="Kim M.H."/>
            <person name="Aydemir T.B."/>
            <person name="Kim J."/>
            <person name="Cousins R.J."/>
        </authorList>
    </citation>
    <scope>FUNCTION</scope>
    <scope>INDUCTION</scope>
</reference>
<reference key="23">
    <citation type="journal article" date="2018" name="FEBS Open Bio">
        <title>Disruption of the mouse Slc39a14 gene encoding zinc transporter ZIP14 is associated with decreased bone mass, likely caused by enhanced bone resorption.</title>
        <authorList>
            <person name="Sasaki S."/>
            <person name="Tsukamoto M."/>
            <person name="Saito M."/>
            <person name="Hojyo S."/>
            <person name="Fukada T."/>
            <person name="Takami M."/>
            <person name="Furuichi T."/>
        </authorList>
    </citation>
    <scope>DISRUPTION PHENOTYPE</scope>
</reference>
<reference key="24">
    <citation type="journal article" date="2018" name="PLoS Genet.">
        <title>Conditional mouse models support the role of SLC39A14 (ZIP14) in Hyperostosis Cranialis Interna and in bone homeostasis.</title>
        <authorList>
            <person name="Hendrickx G."/>
            <person name="Borra V.M."/>
            <person name="Steenackers E."/>
            <person name="Yorgan T.A."/>
            <person name="Hermans C."/>
            <person name="Boudin E."/>
            <person name="Waterval J.J."/>
            <person name="Jansen I.D.C."/>
            <person name="Aydemir T.B."/>
            <person name="Kamerling N."/>
            <person name="Behets G.J."/>
            <person name="Plumeyer C."/>
            <person name="D'Haese P.C."/>
            <person name="Busse B."/>
            <person name="Everts V."/>
            <person name="Lammens M."/>
            <person name="Mortier G."/>
            <person name="Cousins R.J."/>
            <person name="Schinke T."/>
            <person name="Stokroos R.J."/>
            <person name="Manni J.J."/>
            <person name="Van Hul W."/>
        </authorList>
    </citation>
    <scope>DEVELOPMENTAL STAGE</scope>
    <scope>MUTAGENESIS OF LEU-438</scope>
</reference>
<reference key="25">
    <citation type="journal article" date="2019" name="J. Biol. Chem.">
        <title>The intestinal metal transporter ZIP14 maintains systemic manganese homeostasis.</title>
        <authorList>
            <person name="Scheiber I.F."/>
            <person name="Wu Y."/>
            <person name="Morgan S.E."/>
            <person name="Zhao N."/>
        </authorList>
    </citation>
    <scope>FUNCTION</scope>
    <scope>DISRUPTION PHENOTYPE</scope>
</reference>
<protein>
    <recommendedName>
        <fullName evidence="27">Metal cation symporter ZIP14</fullName>
    </recommendedName>
    <alternativeName>
        <fullName evidence="30">Factor for adipocyte differentiation 123</fullName>
        <shortName evidence="30">FAD-123</shortName>
    </alternativeName>
    <alternativeName>
        <fullName evidence="31">Solute carrier family 39 member 14</fullName>
    </alternativeName>
    <alternativeName>
        <fullName evidence="24">Zrt- and Irt-like protein 14</fullName>
        <shortName evidence="24">ZIP-14</shortName>
    </alternativeName>
</protein>
<dbReference type="EMBL" id="AB177995">
    <property type="protein sequence ID" value="BAD16742.1"/>
    <property type="molecule type" value="mRNA"/>
</dbReference>
<dbReference type="EMBL" id="AC025669">
    <property type="status" value="NOT_ANNOTATED_CDS"/>
    <property type="molecule type" value="Genomic_DNA"/>
</dbReference>
<dbReference type="EMBL" id="BC021530">
    <property type="protein sequence ID" value="AAH21530.1"/>
    <property type="molecule type" value="mRNA"/>
</dbReference>
<dbReference type="EMBL" id="AK122197">
    <property type="protein sequence ID" value="BAC65479.2"/>
    <property type="status" value="ALT_SEQ"/>
    <property type="molecule type" value="Transcribed_RNA"/>
</dbReference>
<dbReference type="CCDS" id="CCDS36969.1">
    <molecule id="Q75N73-1"/>
</dbReference>
<dbReference type="CCDS" id="CCDS49536.1">
    <molecule id="Q75N73-3"/>
</dbReference>
<dbReference type="RefSeq" id="NP_001128623.1">
    <molecule id="Q75N73-3"/>
    <property type="nucleotide sequence ID" value="NM_001135151.1"/>
</dbReference>
<dbReference type="RefSeq" id="NP_001128624.1">
    <molecule id="Q75N73-3"/>
    <property type="nucleotide sequence ID" value="NM_001135152.1"/>
</dbReference>
<dbReference type="RefSeq" id="NP_659057.2">
    <molecule id="Q75N73-1"/>
    <property type="nucleotide sequence ID" value="NM_144808.4"/>
</dbReference>
<dbReference type="RefSeq" id="XP_006518851.1">
    <molecule id="Q75N73-3"/>
    <property type="nucleotide sequence ID" value="XM_006518788.3"/>
</dbReference>
<dbReference type="RefSeq" id="XP_006518852.1">
    <molecule id="Q75N73-3"/>
    <property type="nucleotide sequence ID" value="XM_006518789.3"/>
</dbReference>
<dbReference type="RefSeq" id="XP_030103573.1">
    <molecule id="Q75N73-1"/>
    <property type="nucleotide sequence ID" value="XM_030247713.2"/>
</dbReference>
<dbReference type="SMR" id="Q75N73"/>
<dbReference type="BioGRID" id="229393">
    <property type="interactions" value="3"/>
</dbReference>
<dbReference type="FunCoup" id="Q75N73">
    <property type="interactions" value="402"/>
</dbReference>
<dbReference type="STRING" id="10090.ENSMUSP00000066108"/>
<dbReference type="GlyConnect" id="2832">
    <property type="glycosylation" value="1 N-Linked glycan (1 site)"/>
</dbReference>
<dbReference type="GlyCosmos" id="Q75N73">
    <property type="glycosylation" value="4 sites, 1 glycan"/>
</dbReference>
<dbReference type="GlyGen" id="Q75N73">
    <property type="glycosylation" value="4 sites, 5 N-linked glycans (4 sites)"/>
</dbReference>
<dbReference type="iPTMnet" id="Q75N73"/>
<dbReference type="PhosphoSitePlus" id="Q75N73"/>
<dbReference type="SwissPalm" id="Q75N73"/>
<dbReference type="jPOST" id="Q75N73"/>
<dbReference type="PaxDb" id="10090-ENSMUSP00000066108"/>
<dbReference type="PeptideAtlas" id="Q75N73"/>
<dbReference type="ProteomicsDB" id="256578">
    <molecule id="Q75N73-1"/>
</dbReference>
<dbReference type="ProteomicsDB" id="330699"/>
<dbReference type="Antibodypedia" id="9517">
    <property type="antibodies" value="191 antibodies from 27 providers"/>
</dbReference>
<dbReference type="DNASU" id="213053"/>
<dbReference type="Ensembl" id="ENSMUST00000022688.10">
    <molecule id="Q75N73-3"/>
    <property type="protein sequence ID" value="ENSMUSP00000022688.4"/>
    <property type="gene ID" value="ENSMUSG00000022094.16"/>
</dbReference>
<dbReference type="Ensembl" id="ENSMUST00000068044.14">
    <molecule id="Q75N73-1"/>
    <property type="protein sequence ID" value="ENSMUSP00000066108.8"/>
    <property type="gene ID" value="ENSMUSG00000022094.16"/>
</dbReference>
<dbReference type="Ensembl" id="ENSMUST00000152067.8">
    <molecule id="Q75N73-3"/>
    <property type="protein sequence ID" value="ENSMUSP00000119040.2"/>
    <property type="gene ID" value="ENSMUSG00000022094.16"/>
</dbReference>
<dbReference type="GeneID" id="213053"/>
<dbReference type="KEGG" id="mmu:213053"/>
<dbReference type="UCSC" id="uc007uns.1">
    <molecule id="Q75N73-1"/>
    <property type="organism name" value="mouse"/>
</dbReference>
<dbReference type="AGR" id="MGI:2384851"/>
<dbReference type="CTD" id="23516"/>
<dbReference type="MGI" id="MGI:2384851">
    <property type="gene designation" value="Slc39a14"/>
</dbReference>
<dbReference type="VEuPathDB" id="HostDB:ENSMUSG00000022094"/>
<dbReference type="eggNOG" id="KOG2693">
    <property type="taxonomic scope" value="Eukaryota"/>
</dbReference>
<dbReference type="GeneTree" id="ENSGT00940000157986"/>
<dbReference type="HOGENOM" id="CLU_015114_13_0_1"/>
<dbReference type="InParanoid" id="Q75N73"/>
<dbReference type="OMA" id="ADHYSTP"/>
<dbReference type="OrthoDB" id="200954at2759"/>
<dbReference type="PhylomeDB" id="Q75N73"/>
<dbReference type="TreeFam" id="TF318470"/>
<dbReference type="Reactome" id="R-MMU-442380">
    <property type="pathway name" value="Zinc influx into cells by the SLC39 gene family"/>
</dbReference>
<dbReference type="BioGRID-ORCS" id="213053">
    <property type="hits" value="3 hits in 79 CRISPR screens"/>
</dbReference>
<dbReference type="ChiTaRS" id="Slc39a14">
    <property type="organism name" value="mouse"/>
</dbReference>
<dbReference type="PRO" id="PR:Q75N73"/>
<dbReference type="Proteomes" id="UP000000589">
    <property type="component" value="Chromosome 14"/>
</dbReference>
<dbReference type="RNAct" id="Q75N73">
    <property type="molecule type" value="protein"/>
</dbReference>
<dbReference type="Bgee" id="ENSMUSG00000022094">
    <property type="expression patterns" value="Expressed in gastrula and 259 other cell types or tissues"/>
</dbReference>
<dbReference type="ExpressionAtlas" id="Q75N73">
    <property type="expression patterns" value="baseline and differential"/>
</dbReference>
<dbReference type="GO" id="GO:0016324">
    <property type="term" value="C:apical plasma membrane"/>
    <property type="evidence" value="ECO:0000250"/>
    <property type="project" value="UniProtKB"/>
</dbReference>
<dbReference type="GO" id="GO:0016323">
    <property type="term" value="C:basolateral plasma membrane"/>
    <property type="evidence" value="ECO:0000314"/>
    <property type="project" value="UniProtKB"/>
</dbReference>
<dbReference type="GO" id="GO:0031901">
    <property type="term" value="C:early endosome membrane"/>
    <property type="evidence" value="ECO:0000250"/>
    <property type="project" value="UniProtKB"/>
</dbReference>
<dbReference type="GO" id="GO:0031902">
    <property type="term" value="C:late endosome membrane"/>
    <property type="evidence" value="ECO:0000250"/>
    <property type="project" value="UniProtKB"/>
</dbReference>
<dbReference type="GO" id="GO:0005765">
    <property type="term" value="C:lysosomal membrane"/>
    <property type="evidence" value="ECO:0000250"/>
    <property type="project" value="UniProtKB"/>
</dbReference>
<dbReference type="GO" id="GO:0005886">
    <property type="term" value="C:plasma membrane"/>
    <property type="evidence" value="ECO:0000314"/>
    <property type="project" value="UniProtKB"/>
</dbReference>
<dbReference type="GO" id="GO:0015086">
    <property type="term" value="F:cadmium ion transmembrane transporter activity"/>
    <property type="evidence" value="ECO:0000314"/>
    <property type="project" value="UniProtKB"/>
</dbReference>
<dbReference type="GO" id="GO:0015093">
    <property type="term" value="F:ferrous iron transmembrane transporter activity"/>
    <property type="evidence" value="ECO:0000314"/>
    <property type="project" value="MGI"/>
</dbReference>
<dbReference type="GO" id="GO:0005381">
    <property type="term" value="F:iron ion transmembrane transporter activity"/>
    <property type="evidence" value="ECO:0000314"/>
    <property type="project" value="UniProtKB"/>
</dbReference>
<dbReference type="GO" id="GO:0005384">
    <property type="term" value="F:manganese ion transmembrane transporter activity"/>
    <property type="evidence" value="ECO:0000314"/>
    <property type="project" value="UniProtKB"/>
</dbReference>
<dbReference type="GO" id="GO:0015296">
    <property type="term" value="F:monoatomic anion:monoatomic cation symporter activity"/>
    <property type="evidence" value="ECO:0000314"/>
    <property type="project" value="UniProtKB"/>
</dbReference>
<dbReference type="GO" id="GO:0140410">
    <property type="term" value="F:monoatomic cation:bicarbonate symporter activity"/>
    <property type="evidence" value="ECO:0007669"/>
    <property type="project" value="Ensembl"/>
</dbReference>
<dbReference type="GO" id="GO:0005385">
    <property type="term" value="F:zinc ion transmembrane transporter activity"/>
    <property type="evidence" value="ECO:0000314"/>
    <property type="project" value="UniProtKB"/>
</dbReference>
<dbReference type="GO" id="GO:0071333">
    <property type="term" value="P:cellular response to glucose stimulus"/>
    <property type="evidence" value="ECO:0000314"/>
    <property type="project" value="UniProtKB"/>
</dbReference>
<dbReference type="GO" id="GO:0032869">
    <property type="term" value="P:cellular response to insulin stimulus"/>
    <property type="evidence" value="ECO:0000315"/>
    <property type="project" value="UniProtKB"/>
</dbReference>
<dbReference type="GO" id="GO:0002062">
    <property type="term" value="P:chondrocyte differentiation"/>
    <property type="evidence" value="ECO:0000315"/>
    <property type="project" value="UniProtKB"/>
</dbReference>
<dbReference type="GO" id="GO:0006094">
    <property type="term" value="P:gluconeogenesis"/>
    <property type="evidence" value="ECO:0000315"/>
    <property type="project" value="UniProtKB"/>
</dbReference>
<dbReference type="GO" id="GO:0098662">
    <property type="term" value="P:inorganic cation transmembrane transport"/>
    <property type="evidence" value="ECO:0000314"/>
    <property type="project" value="UniProtKB"/>
</dbReference>
<dbReference type="GO" id="GO:0008286">
    <property type="term" value="P:insulin receptor signaling pathway"/>
    <property type="evidence" value="ECO:0000315"/>
    <property type="project" value="UniProtKB"/>
</dbReference>
<dbReference type="GO" id="GO:0006882">
    <property type="term" value="P:intracellular zinc ion homeostasis"/>
    <property type="evidence" value="ECO:0000315"/>
    <property type="project" value="UniProtKB"/>
</dbReference>
<dbReference type="GO" id="GO:0033212">
    <property type="term" value="P:iron import into cell"/>
    <property type="evidence" value="ECO:0000315"/>
    <property type="project" value="UniProtKB"/>
</dbReference>
<dbReference type="GO" id="GO:0034755">
    <property type="term" value="P:iron ion transmembrane transport"/>
    <property type="evidence" value="ECO:0000314"/>
    <property type="project" value="UniProtKB"/>
</dbReference>
<dbReference type="GO" id="GO:0006826">
    <property type="term" value="P:iron ion transport"/>
    <property type="evidence" value="ECO:0000314"/>
    <property type="project" value="MGI"/>
</dbReference>
<dbReference type="GO" id="GO:0055071">
    <property type="term" value="P:manganese ion homeostasis"/>
    <property type="evidence" value="ECO:0000315"/>
    <property type="project" value="UniProtKB"/>
</dbReference>
<dbReference type="GO" id="GO:0071421">
    <property type="term" value="P:manganese ion transmembrane transport"/>
    <property type="evidence" value="ECO:0000314"/>
    <property type="project" value="UniProtKB"/>
</dbReference>
<dbReference type="GO" id="GO:0045745">
    <property type="term" value="P:positive regulation of G protein-coupled receptor signaling pathway"/>
    <property type="evidence" value="ECO:0000315"/>
    <property type="project" value="UniProtKB"/>
</dbReference>
<dbReference type="GO" id="GO:0010817">
    <property type="term" value="P:regulation of hormone levels"/>
    <property type="evidence" value="ECO:0000315"/>
    <property type="project" value="UniProtKB"/>
</dbReference>
<dbReference type="GO" id="GO:0071578">
    <property type="term" value="P:zinc ion import across plasma membrane"/>
    <property type="evidence" value="ECO:0000250"/>
    <property type="project" value="UniProtKB"/>
</dbReference>
<dbReference type="GO" id="GO:0071577">
    <property type="term" value="P:zinc ion transmembrane transport"/>
    <property type="evidence" value="ECO:0000314"/>
    <property type="project" value="UniProtKB"/>
</dbReference>
<dbReference type="GO" id="GO:0006829">
    <property type="term" value="P:zinc ion transport"/>
    <property type="evidence" value="ECO:0000314"/>
    <property type="project" value="MGI"/>
</dbReference>
<dbReference type="InterPro" id="IPR003689">
    <property type="entry name" value="ZIP"/>
</dbReference>
<dbReference type="InterPro" id="IPR050799">
    <property type="entry name" value="ZIP_Transporter"/>
</dbReference>
<dbReference type="PANTHER" id="PTHR12191:SF5">
    <property type="entry name" value="METAL CATION SYMPORTER ZIP14"/>
    <property type="match status" value="1"/>
</dbReference>
<dbReference type="PANTHER" id="PTHR12191">
    <property type="entry name" value="SOLUTE CARRIER FAMILY 39"/>
    <property type="match status" value="1"/>
</dbReference>
<dbReference type="Pfam" id="PF02535">
    <property type="entry name" value="Zip"/>
    <property type="match status" value="1"/>
</dbReference>
<gene>
    <name evidence="31" type="primary">Slc39a14</name>
    <name evidence="30" type="synonym">Fad123</name>
    <name evidence="29" type="synonym">Kiaa0062</name>
    <name evidence="24" type="synonym">Zip14</name>
</gene>
<evidence type="ECO:0000250" key="1">
    <source>
        <dbReference type="UniProtKB" id="Q15043"/>
    </source>
</evidence>
<evidence type="ECO:0000255" key="2"/>
<evidence type="ECO:0000269" key="3">
    <source>
    </source>
</evidence>
<evidence type="ECO:0000269" key="4">
    <source>
    </source>
</evidence>
<evidence type="ECO:0000269" key="5">
    <source>
    </source>
</evidence>
<evidence type="ECO:0000269" key="6">
    <source>
    </source>
</evidence>
<evidence type="ECO:0000269" key="7">
    <source>
    </source>
</evidence>
<evidence type="ECO:0000269" key="8">
    <source>
    </source>
</evidence>
<evidence type="ECO:0000269" key="9">
    <source>
    </source>
</evidence>
<evidence type="ECO:0000269" key="10">
    <source>
    </source>
</evidence>
<evidence type="ECO:0000269" key="11">
    <source>
    </source>
</evidence>
<evidence type="ECO:0000269" key="12">
    <source>
    </source>
</evidence>
<evidence type="ECO:0000269" key="13">
    <source>
    </source>
</evidence>
<evidence type="ECO:0000269" key="14">
    <source>
    </source>
</evidence>
<evidence type="ECO:0000269" key="15">
    <source>
    </source>
</evidence>
<evidence type="ECO:0000269" key="16">
    <source>
    </source>
</evidence>
<evidence type="ECO:0000269" key="17">
    <source>
    </source>
</evidence>
<evidence type="ECO:0000269" key="18">
    <source>
    </source>
</evidence>
<evidence type="ECO:0000269" key="19">
    <source>
    </source>
</evidence>
<evidence type="ECO:0000269" key="20">
    <source>
    </source>
</evidence>
<evidence type="ECO:0000269" key="21">
    <source>
    </source>
</evidence>
<evidence type="ECO:0000269" key="22">
    <source>
    </source>
</evidence>
<evidence type="ECO:0000269" key="23">
    <source>
    </source>
</evidence>
<evidence type="ECO:0000303" key="24">
    <source>
    </source>
</evidence>
<evidence type="ECO:0000303" key="25">
    <source>
    </source>
</evidence>
<evidence type="ECO:0000305" key="26"/>
<evidence type="ECO:0000305" key="27">
    <source>
    </source>
</evidence>
<evidence type="ECO:0000305" key="28">
    <source>
    </source>
</evidence>
<evidence type="ECO:0000312" key="29">
    <source>
        <dbReference type="EMBL" id="BAC65479.2"/>
    </source>
</evidence>
<evidence type="ECO:0000312" key="30">
    <source>
        <dbReference type="EMBL" id="BAD16742.1"/>
    </source>
</evidence>
<evidence type="ECO:0000312" key="31">
    <source>
        <dbReference type="MGI" id="MGI:2384851"/>
    </source>
</evidence>